<name>RS3_MYCGE</name>
<sequence>MGQKVNSNGLRFGINKNWISRWTASSNQQTATWLVQDEKIRNLFFINYRNAQVSNVEIERTQTTVDVYVYAAQPALLIGSENKNIQKITKMIQIIVGRKIKLDLTINEIGSPMLSSRIIARDIANAIENRVPLRSAMRQALTKVLKAGANGIKVLVSGRLNGAEIARDKMYIEGNMPLSTLRADIDYAFEKAKTTYGIIGVKVWINRGMIYAKGLNRTPAHILHPQKKQLKTPTIKKTNSVIAKQKLTGSDIETASLKALTDNNQNHE</sequence>
<comment type="function">
    <text evidence="2">Binds the lower part of the 30S subunit head. Binds mRNA in the 70S ribosome, positioning it for translation.</text>
</comment>
<comment type="subunit">
    <text evidence="2">Part of the 30S ribosomal subunit. Forms a tight complex with proteins S10 and S14.</text>
</comment>
<comment type="similarity">
    <text evidence="2">Belongs to the universal ribosomal protein uS3 family.</text>
</comment>
<dbReference type="EMBL" id="L43967">
    <property type="protein sequence ID" value="AAC71375.1"/>
    <property type="molecule type" value="Genomic_DNA"/>
</dbReference>
<dbReference type="PIR" id="D64217">
    <property type="entry name" value="D64217"/>
</dbReference>
<dbReference type="RefSeq" id="WP_009885841.1">
    <property type="nucleotide sequence ID" value="NC_000908.2"/>
</dbReference>
<dbReference type="SMR" id="P47403"/>
<dbReference type="FunCoup" id="P47403">
    <property type="interactions" value="212"/>
</dbReference>
<dbReference type="STRING" id="243273.MG_157"/>
<dbReference type="GeneID" id="88282290"/>
<dbReference type="KEGG" id="mge:MG_157"/>
<dbReference type="eggNOG" id="COG0092">
    <property type="taxonomic scope" value="Bacteria"/>
</dbReference>
<dbReference type="HOGENOM" id="CLU_058591_0_2_14"/>
<dbReference type="InParanoid" id="P47403"/>
<dbReference type="OrthoDB" id="9806396at2"/>
<dbReference type="BioCyc" id="MGEN243273:G1GJ2-181-MONOMER"/>
<dbReference type="Proteomes" id="UP000000807">
    <property type="component" value="Chromosome"/>
</dbReference>
<dbReference type="GO" id="GO:0022627">
    <property type="term" value="C:cytosolic small ribosomal subunit"/>
    <property type="evidence" value="ECO:0000318"/>
    <property type="project" value="GO_Central"/>
</dbReference>
<dbReference type="GO" id="GO:0003729">
    <property type="term" value="F:mRNA binding"/>
    <property type="evidence" value="ECO:0007669"/>
    <property type="project" value="UniProtKB-UniRule"/>
</dbReference>
<dbReference type="GO" id="GO:0019843">
    <property type="term" value="F:rRNA binding"/>
    <property type="evidence" value="ECO:0007669"/>
    <property type="project" value="UniProtKB-UniRule"/>
</dbReference>
<dbReference type="GO" id="GO:0003735">
    <property type="term" value="F:structural constituent of ribosome"/>
    <property type="evidence" value="ECO:0000318"/>
    <property type="project" value="GO_Central"/>
</dbReference>
<dbReference type="GO" id="GO:0006412">
    <property type="term" value="P:translation"/>
    <property type="evidence" value="ECO:0007669"/>
    <property type="project" value="UniProtKB-UniRule"/>
</dbReference>
<dbReference type="CDD" id="cd02412">
    <property type="entry name" value="KH-II_30S_S3"/>
    <property type="match status" value="1"/>
</dbReference>
<dbReference type="FunFam" id="3.30.300.20:FF:000001">
    <property type="entry name" value="30S ribosomal protein S3"/>
    <property type="match status" value="1"/>
</dbReference>
<dbReference type="Gene3D" id="3.30.300.20">
    <property type="match status" value="1"/>
</dbReference>
<dbReference type="Gene3D" id="3.30.1140.32">
    <property type="entry name" value="Ribosomal protein S3, C-terminal domain"/>
    <property type="match status" value="1"/>
</dbReference>
<dbReference type="HAMAP" id="MF_01309_B">
    <property type="entry name" value="Ribosomal_uS3_B"/>
    <property type="match status" value="1"/>
</dbReference>
<dbReference type="InterPro" id="IPR004087">
    <property type="entry name" value="KH_dom"/>
</dbReference>
<dbReference type="InterPro" id="IPR015946">
    <property type="entry name" value="KH_dom-like_a/b"/>
</dbReference>
<dbReference type="InterPro" id="IPR004044">
    <property type="entry name" value="KH_dom_type_2"/>
</dbReference>
<dbReference type="InterPro" id="IPR009019">
    <property type="entry name" value="KH_sf_prok-type"/>
</dbReference>
<dbReference type="InterPro" id="IPR036419">
    <property type="entry name" value="Ribosomal_S3_C_sf"/>
</dbReference>
<dbReference type="InterPro" id="IPR005704">
    <property type="entry name" value="Ribosomal_uS3_bac-typ"/>
</dbReference>
<dbReference type="InterPro" id="IPR001351">
    <property type="entry name" value="Ribosomal_uS3_C"/>
</dbReference>
<dbReference type="InterPro" id="IPR018280">
    <property type="entry name" value="Ribosomal_uS3_CS"/>
</dbReference>
<dbReference type="NCBIfam" id="TIGR01009">
    <property type="entry name" value="rpsC_bact"/>
    <property type="match status" value="1"/>
</dbReference>
<dbReference type="PANTHER" id="PTHR11760">
    <property type="entry name" value="30S/40S RIBOSOMAL PROTEIN S3"/>
    <property type="match status" value="1"/>
</dbReference>
<dbReference type="PANTHER" id="PTHR11760:SF19">
    <property type="entry name" value="SMALL RIBOSOMAL SUBUNIT PROTEIN US3C"/>
    <property type="match status" value="1"/>
</dbReference>
<dbReference type="Pfam" id="PF07650">
    <property type="entry name" value="KH_2"/>
    <property type="match status" value="1"/>
</dbReference>
<dbReference type="Pfam" id="PF00189">
    <property type="entry name" value="Ribosomal_S3_C"/>
    <property type="match status" value="1"/>
</dbReference>
<dbReference type="SMART" id="SM00322">
    <property type="entry name" value="KH"/>
    <property type="match status" value="1"/>
</dbReference>
<dbReference type="SUPFAM" id="SSF54814">
    <property type="entry name" value="Prokaryotic type KH domain (KH-domain type II)"/>
    <property type="match status" value="1"/>
</dbReference>
<dbReference type="SUPFAM" id="SSF54821">
    <property type="entry name" value="Ribosomal protein S3 C-terminal domain"/>
    <property type="match status" value="1"/>
</dbReference>
<dbReference type="PROSITE" id="PS50823">
    <property type="entry name" value="KH_TYPE_2"/>
    <property type="match status" value="1"/>
</dbReference>
<dbReference type="PROSITE" id="PS00548">
    <property type="entry name" value="RIBOSOMAL_S3"/>
    <property type="match status" value="1"/>
</dbReference>
<protein>
    <recommendedName>
        <fullName evidence="2">Small ribosomal subunit protein uS3</fullName>
    </recommendedName>
    <alternativeName>
        <fullName evidence="3">30S ribosomal protein S3</fullName>
    </alternativeName>
</protein>
<accession>P47403</accession>
<evidence type="ECO:0000250" key="1"/>
<evidence type="ECO:0000255" key="2">
    <source>
        <dbReference type="HAMAP-Rule" id="MF_01309"/>
    </source>
</evidence>
<evidence type="ECO:0000305" key="3"/>
<keyword id="KW-1185">Reference proteome</keyword>
<keyword id="KW-0687">Ribonucleoprotein</keyword>
<keyword id="KW-0689">Ribosomal protein</keyword>
<keyword id="KW-0694">RNA-binding</keyword>
<keyword id="KW-0699">rRNA-binding</keyword>
<organism>
    <name type="scientific">Mycoplasma genitalium (strain ATCC 33530 / DSM 19775 / NCTC 10195 / G37)</name>
    <name type="common">Mycoplasmoides genitalium</name>
    <dbReference type="NCBI Taxonomy" id="243273"/>
    <lineage>
        <taxon>Bacteria</taxon>
        <taxon>Bacillati</taxon>
        <taxon>Mycoplasmatota</taxon>
        <taxon>Mycoplasmoidales</taxon>
        <taxon>Mycoplasmoidaceae</taxon>
        <taxon>Mycoplasmoides</taxon>
    </lineage>
</organism>
<reference key="1">
    <citation type="journal article" date="1995" name="Science">
        <title>The minimal gene complement of Mycoplasma genitalium.</title>
        <authorList>
            <person name="Fraser C.M."/>
            <person name="Gocayne J.D."/>
            <person name="White O."/>
            <person name="Adams M.D."/>
            <person name="Clayton R.A."/>
            <person name="Fleischmann R.D."/>
            <person name="Bult C.J."/>
            <person name="Kerlavage A.R."/>
            <person name="Sutton G.G."/>
            <person name="Kelley J.M."/>
            <person name="Fritchman J.L."/>
            <person name="Weidman J.F."/>
            <person name="Small K.V."/>
            <person name="Sandusky M."/>
            <person name="Fuhrmann J.L."/>
            <person name="Nguyen D.T."/>
            <person name="Utterback T.R."/>
            <person name="Saudek D.M."/>
            <person name="Phillips C.A."/>
            <person name="Merrick J.M."/>
            <person name="Tomb J.-F."/>
            <person name="Dougherty B.A."/>
            <person name="Bott K.F."/>
            <person name="Hu P.-C."/>
            <person name="Lucier T.S."/>
            <person name="Peterson S.N."/>
            <person name="Smith H.O."/>
            <person name="Hutchison C.A. III"/>
            <person name="Venter J.C."/>
        </authorList>
    </citation>
    <scope>NUCLEOTIDE SEQUENCE [LARGE SCALE GENOMIC DNA]</scope>
    <source>
        <strain>ATCC 33530 / DSM 19775 / NCTC 10195 / G37</strain>
    </source>
</reference>
<proteinExistence type="inferred from homology"/>
<feature type="initiator methionine" description="Removed" evidence="1">
    <location>
        <position position="1"/>
    </location>
</feature>
<feature type="chain" id="PRO_0000130150" description="Small ribosomal subunit protein uS3">
    <location>
        <begin position="2"/>
        <end position="268"/>
    </location>
</feature>
<feature type="domain" description="KH type-2" evidence="2">
    <location>
        <begin position="40"/>
        <end position="110"/>
    </location>
</feature>
<gene>
    <name evidence="2" type="primary">rpsC</name>
    <name evidence="2" type="synonym">rps3</name>
    <name type="ordered locus">MG157</name>
</gene>